<accession>Q55143</accession>
<feature type="chain" id="PRO_0000195270" description="Diacylglycerol kinase">
    <location>
        <begin position="1"/>
        <end position="175"/>
    </location>
</feature>
<feature type="transmembrane region" description="Helical" evidence="2">
    <location>
        <begin position="55"/>
        <end position="75"/>
    </location>
</feature>
<feature type="transmembrane region" description="Helical" evidence="2">
    <location>
        <begin position="96"/>
        <end position="116"/>
    </location>
</feature>
<feature type="transmembrane region" description="Helical" evidence="2">
    <location>
        <begin position="151"/>
        <end position="171"/>
    </location>
</feature>
<feature type="active site" description="Proton acceptor" evidence="1">
    <location>
        <position position="118"/>
    </location>
</feature>
<feature type="binding site" evidence="1">
    <location>
        <position position="125"/>
    </location>
    <ligand>
        <name>a divalent metal cation</name>
        <dbReference type="ChEBI" id="CHEBI:60240"/>
    </ligand>
</feature>
<name>KDGL_SYNY3</name>
<gene>
    <name type="primary">dgkA</name>
    <name type="ordered locus">slr0054</name>
</gene>
<organism>
    <name type="scientific">Synechocystis sp. (strain ATCC 27184 / PCC 6803 / Kazusa)</name>
    <dbReference type="NCBI Taxonomy" id="1111708"/>
    <lineage>
        <taxon>Bacteria</taxon>
        <taxon>Bacillati</taxon>
        <taxon>Cyanobacteriota</taxon>
        <taxon>Cyanophyceae</taxon>
        <taxon>Synechococcales</taxon>
        <taxon>Merismopediaceae</taxon>
        <taxon>Synechocystis</taxon>
    </lineage>
</organism>
<reference key="1">
    <citation type="journal article" date="1995" name="DNA Res.">
        <title>Sequence analysis of the genome of the unicellular cyanobacterium Synechocystis sp. strain PCC6803. I. Sequence features in the 1 Mb region from map positions 64% to 92% of the genome.</title>
        <authorList>
            <person name="Kaneko T."/>
            <person name="Tanaka A."/>
            <person name="Sato S."/>
            <person name="Kotani H."/>
            <person name="Sazuka T."/>
            <person name="Miyajima N."/>
            <person name="Sugiura M."/>
            <person name="Tabata S."/>
        </authorList>
    </citation>
    <scope>NUCLEOTIDE SEQUENCE [LARGE SCALE GENOMIC DNA]</scope>
    <source>
        <strain>ATCC 27184 / PCC 6803 / N-1</strain>
    </source>
</reference>
<reference key="2">
    <citation type="journal article" date="1996" name="DNA Res.">
        <title>Sequence analysis of the genome of the unicellular cyanobacterium Synechocystis sp. strain PCC6803. II. Sequence determination of the entire genome and assignment of potential protein-coding regions.</title>
        <authorList>
            <person name="Kaneko T."/>
            <person name="Sato S."/>
            <person name="Kotani H."/>
            <person name="Tanaka A."/>
            <person name="Asamizu E."/>
            <person name="Nakamura Y."/>
            <person name="Miyajima N."/>
            <person name="Hirosawa M."/>
            <person name="Sugiura M."/>
            <person name="Sasamoto S."/>
            <person name="Kimura T."/>
            <person name="Hosouchi T."/>
            <person name="Matsuno A."/>
            <person name="Muraki A."/>
            <person name="Nakazaki N."/>
            <person name="Naruo K."/>
            <person name="Okumura S."/>
            <person name="Shimpo S."/>
            <person name="Takeuchi C."/>
            <person name="Wada T."/>
            <person name="Watanabe A."/>
            <person name="Yamada M."/>
            <person name="Yasuda M."/>
            <person name="Tabata S."/>
        </authorList>
    </citation>
    <scope>NUCLEOTIDE SEQUENCE [LARGE SCALE GENOMIC DNA]</scope>
    <source>
        <strain>ATCC 27184 / PCC 6803 / Kazusa</strain>
    </source>
</reference>
<keyword id="KW-0067">ATP-binding</keyword>
<keyword id="KW-1003">Cell membrane</keyword>
<keyword id="KW-0418">Kinase</keyword>
<keyword id="KW-0444">Lipid biosynthesis</keyword>
<keyword id="KW-0443">Lipid metabolism</keyword>
<keyword id="KW-0460">Magnesium</keyword>
<keyword id="KW-0472">Membrane</keyword>
<keyword id="KW-0479">Metal-binding</keyword>
<keyword id="KW-0547">Nucleotide-binding</keyword>
<keyword id="KW-0594">Phospholipid biosynthesis</keyword>
<keyword id="KW-1208">Phospholipid metabolism</keyword>
<keyword id="KW-1185">Reference proteome</keyword>
<keyword id="KW-0808">Transferase</keyword>
<keyword id="KW-0812">Transmembrane</keyword>
<keyword id="KW-1133">Transmembrane helix</keyword>
<dbReference type="EC" id="2.7.1.107" evidence="1"/>
<dbReference type="EMBL" id="BA000022">
    <property type="protein sequence ID" value="BAA10279.1"/>
    <property type="molecule type" value="Genomic_DNA"/>
</dbReference>
<dbReference type="PIR" id="S74361">
    <property type="entry name" value="S74361"/>
</dbReference>
<dbReference type="SMR" id="Q55143"/>
<dbReference type="FunCoup" id="Q55143">
    <property type="interactions" value="47"/>
</dbReference>
<dbReference type="IntAct" id="Q55143">
    <property type="interactions" value="1"/>
</dbReference>
<dbReference type="STRING" id="1148.gene:10499778"/>
<dbReference type="PaxDb" id="1148-1001137"/>
<dbReference type="EnsemblBacteria" id="BAA10279">
    <property type="protein sequence ID" value="BAA10279"/>
    <property type="gene ID" value="BAA10279"/>
</dbReference>
<dbReference type="KEGG" id="syn:slr0054"/>
<dbReference type="eggNOG" id="COG0818">
    <property type="taxonomic scope" value="Bacteria"/>
</dbReference>
<dbReference type="InParanoid" id="Q55143"/>
<dbReference type="PhylomeDB" id="Q55143"/>
<dbReference type="Proteomes" id="UP000001425">
    <property type="component" value="Chromosome"/>
</dbReference>
<dbReference type="GO" id="GO:0005886">
    <property type="term" value="C:plasma membrane"/>
    <property type="evidence" value="ECO:0000318"/>
    <property type="project" value="GO_Central"/>
</dbReference>
<dbReference type="GO" id="GO:0005524">
    <property type="term" value="F:ATP binding"/>
    <property type="evidence" value="ECO:0007669"/>
    <property type="project" value="UniProtKB-KW"/>
</dbReference>
<dbReference type="GO" id="GO:0004143">
    <property type="term" value="F:ATP-dependent diacylglycerol kinase activity"/>
    <property type="evidence" value="ECO:0007669"/>
    <property type="project" value="UniProtKB-EC"/>
</dbReference>
<dbReference type="GO" id="GO:0001727">
    <property type="term" value="F:lipid kinase activity"/>
    <property type="evidence" value="ECO:0000318"/>
    <property type="project" value="GO_Central"/>
</dbReference>
<dbReference type="GO" id="GO:0046872">
    <property type="term" value="F:metal ion binding"/>
    <property type="evidence" value="ECO:0007669"/>
    <property type="project" value="UniProtKB-KW"/>
</dbReference>
<dbReference type="GO" id="GO:0008654">
    <property type="term" value="P:phospholipid biosynthetic process"/>
    <property type="evidence" value="ECO:0007669"/>
    <property type="project" value="UniProtKB-KW"/>
</dbReference>
<dbReference type="CDD" id="cd14265">
    <property type="entry name" value="UDPK_IM_like"/>
    <property type="match status" value="1"/>
</dbReference>
<dbReference type="Gene3D" id="1.10.287.3610">
    <property type="match status" value="1"/>
</dbReference>
<dbReference type="InterPro" id="IPR000829">
    <property type="entry name" value="DAGK"/>
</dbReference>
<dbReference type="InterPro" id="IPR036945">
    <property type="entry name" value="DAGK_sf"/>
</dbReference>
<dbReference type="InterPro" id="IPR033717">
    <property type="entry name" value="UDPK"/>
</dbReference>
<dbReference type="PANTHER" id="PTHR34299">
    <property type="entry name" value="DIACYLGLYCEROL KINASE"/>
    <property type="match status" value="1"/>
</dbReference>
<dbReference type="PANTHER" id="PTHR34299:SF1">
    <property type="entry name" value="DIACYLGLYCEROL KINASE"/>
    <property type="match status" value="1"/>
</dbReference>
<dbReference type="Pfam" id="PF01219">
    <property type="entry name" value="DAGK_prokar"/>
    <property type="match status" value="1"/>
</dbReference>
<dbReference type="PROSITE" id="PS01069">
    <property type="entry name" value="DAGK_PROKAR"/>
    <property type="match status" value="1"/>
</dbReference>
<comment type="function">
    <text evidence="1">Catalyzes the ATP-dependent phosphorylation of sn-l,2-diacylglycerol (DAG) to phosphatidic acid.</text>
</comment>
<comment type="catalytic activity">
    <reaction evidence="1">
        <text>a 1,2-diacyl-sn-glycerol + ATP = a 1,2-diacyl-sn-glycero-3-phosphate + ADP + H(+)</text>
        <dbReference type="Rhea" id="RHEA:10272"/>
        <dbReference type="ChEBI" id="CHEBI:15378"/>
        <dbReference type="ChEBI" id="CHEBI:17815"/>
        <dbReference type="ChEBI" id="CHEBI:30616"/>
        <dbReference type="ChEBI" id="CHEBI:58608"/>
        <dbReference type="ChEBI" id="CHEBI:456216"/>
        <dbReference type="EC" id="2.7.1.107"/>
    </reaction>
</comment>
<comment type="cofactor">
    <cofactor evidence="1">
        <name>Mg(2+)</name>
        <dbReference type="ChEBI" id="CHEBI:18420"/>
    </cofactor>
</comment>
<comment type="subcellular location">
    <subcellularLocation>
        <location evidence="3">Cell membrane</location>
        <topology evidence="2">Multi-pass membrane protein</topology>
    </subcellularLocation>
</comment>
<comment type="similarity">
    <text evidence="3">Belongs to the bacterial diacylglycerol kinase family.</text>
</comment>
<evidence type="ECO:0000250" key="1">
    <source>
        <dbReference type="UniProtKB" id="P0ABN1"/>
    </source>
</evidence>
<evidence type="ECO:0000255" key="2"/>
<evidence type="ECO:0000305" key="3"/>
<protein>
    <recommendedName>
        <fullName evidence="1">Diacylglycerol kinase</fullName>
        <shortName evidence="1">DAGK</shortName>
        <ecNumber evidence="1">2.7.1.107</ecNumber>
    </recommendedName>
    <alternativeName>
        <fullName evidence="1">Diglyceride kinase</fullName>
        <shortName evidence="1">DGK</shortName>
    </alternativeName>
</protein>
<proteinExistence type="inferred from homology"/>
<sequence length="175" mass="18248">MKSVYPMSSPSSAVFADQGLSGKANQTQPPPPLGLVVPASKPGAKKPLRKNAWQVAPNLLVSFRYAWAGVSYAFATQRNFRIHTFTGVAVITAASLLHLEAIAVAVLALTSCLVMILELLNTALESVVDLTVGQSYHELAKIAKDCAAGAVLLAAIAAVIVGGCLLLPPLLSLMV</sequence>